<comment type="function">
    <text evidence="4">Converts the inactive gibberellin precursors GA9 and GA20 in the bioactives gibberellins GA4 and GA1.</text>
</comment>
<comment type="catalytic activity">
    <reaction>
        <text>gibberellin A20 + 2-oxoglutarate + O2 = gibberellin A1 + succinate + CO2</text>
        <dbReference type="Rhea" id="RHEA:10104"/>
        <dbReference type="ChEBI" id="CHEBI:15379"/>
        <dbReference type="ChEBI" id="CHEBI:16526"/>
        <dbReference type="ChEBI" id="CHEBI:16810"/>
        <dbReference type="ChEBI" id="CHEBI:30031"/>
        <dbReference type="ChEBI" id="CHEBI:58524"/>
        <dbReference type="ChEBI" id="CHEBI:58526"/>
        <dbReference type="EC" id="1.14.11.15"/>
    </reaction>
</comment>
<comment type="cofactor">
    <cofactor evidence="1">
        <name>L-ascorbate</name>
        <dbReference type="ChEBI" id="CHEBI:38290"/>
    </cofactor>
</comment>
<comment type="cofactor">
    <cofactor evidence="1">
        <name>Fe cation</name>
        <dbReference type="ChEBI" id="CHEBI:24875"/>
    </cofactor>
</comment>
<comment type="similarity">
    <text evidence="5">Belongs to the iron/ascorbate-dependent oxidoreductase family. GA3OX subfamily.</text>
</comment>
<proteinExistence type="evidence at transcript level"/>
<protein>
    <recommendedName>
        <fullName>Gibberellin 3-beta-dioxygenase 2-2</fullName>
        <ecNumber>1.14.11.15</ecNumber>
    </recommendedName>
    <alternativeName>
        <fullName>Gibberellin 3 beta-hydroxylase 2-2</fullName>
    </alternativeName>
    <alternativeName>
        <fullName>Gibberellin 3-oxidase 2-2</fullName>
    </alternativeName>
</protein>
<gene>
    <name type="primary">GA3ox2-2</name>
</gene>
<organism>
    <name type="scientific">Triticum aestivum</name>
    <name type="common">Wheat</name>
    <dbReference type="NCBI Taxonomy" id="4565"/>
    <lineage>
        <taxon>Eukaryota</taxon>
        <taxon>Viridiplantae</taxon>
        <taxon>Streptophyta</taxon>
        <taxon>Embryophyta</taxon>
        <taxon>Tracheophyta</taxon>
        <taxon>Spermatophyta</taxon>
        <taxon>Magnoliopsida</taxon>
        <taxon>Liliopsida</taxon>
        <taxon>Poales</taxon>
        <taxon>Poaceae</taxon>
        <taxon>BOP clade</taxon>
        <taxon>Pooideae</taxon>
        <taxon>Triticodae</taxon>
        <taxon>Triticeae</taxon>
        <taxon>Triticinae</taxon>
        <taxon>Triticum</taxon>
    </lineage>
</organism>
<dbReference type="EC" id="1.14.11.15"/>
<dbReference type="EMBL" id="DQ118251">
    <property type="protein sequence ID" value="AAZ94378.1"/>
    <property type="molecule type" value="mRNA"/>
</dbReference>
<dbReference type="SMR" id="Q3I410"/>
<dbReference type="STRING" id="4565.Q3I410"/>
<dbReference type="EnsemblPlants" id="TraesARI3D03G01867980.1">
    <property type="protein sequence ID" value="TraesARI3D03G01867980.1"/>
    <property type="gene ID" value="TraesARI3D03G01867980"/>
</dbReference>
<dbReference type="EnsemblPlants" id="TraesCAD_scaffold_009178_01G000100.1">
    <property type="protein sequence ID" value="TraesCAD_scaffold_009178_01G000100.1"/>
    <property type="gene ID" value="TraesCAD_scaffold_009178_01G000100"/>
</dbReference>
<dbReference type="EnsemblPlants" id="TraesCLE_scaffold_007974_01G000100.1">
    <property type="protein sequence ID" value="TraesCLE_scaffold_007974_01G000100.1"/>
    <property type="gene ID" value="TraesCLE_scaffold_007974_01G000100"/>
</dbReference>
<dbReference type="EnsemblPlants" id="TraesCS3D02G124500.1">
    <property type="protein sequence ID" value="TraesCS3D02G124500.1"/>
    <property type="gene ID" value="TraesCS3D02G124500"/>
</dbReference>
<dbReference type="EnsemblPlants" id="TraesCS3D03G0261200.1">
    <property type="protein sequence ID" value="TraesCS3D03G0261200.1.CDS"/>
    <property type="gene ID" value="TraesCS3D03G0261200"/>
</dbReference>
<dbReference type="EnsemblPlants" id="TraesJAG3D03G01844250.1">
    <property type="protein sequence ID" value="TraesJAG3D03G01844250.1"/>
    <property type="gene ID" value="TraesJAG3D03G01844250"/>
</dbReference>
<dbReference type="EnsemblPlants" id="TraesJUL3D03G01853490.1">
    <property type="protein sequence ID" value="TraesJUL3D03G01853490.1"/>
    <property type="gene ID" value="TraesJUL3D03G01853490"/>
</dbReference>
<dbReference type="EnsemblPlants" id="TraesKAR3D01G0067850.1">
    <property type="protein sequence ID" value="cds.TraesKAR3D01G0067850.1"/>
    <property type="gene ID" value="TraesKAR3D01G0067850"/>
</dbReference>
<dbReference type="EnsemblPlants" id="TraesLAC3D03G01777020.1">
    <property type="protein sequence ID" value="TraesLAC3D03G01777020.1"/>
    <property type="gene ID" value="TraesLAC3D03G01777020"/>
</dbReference>
<dbReference type="EnsemblPlants" id="TraesLDM3D03G01833850.1">
    <property type="protein sequence ID" value="TraesLDM3D03G01833850.1"/>
    <property type="gene ID" value="TraesLDM3D03G01833850"/>
</dbReference>
<dbReference type="EnsemblPlants" id="TraesMAC3D03G01834000.1">
    <property type="protein sequence ID" value="TraesMAC3D03G01834000.1"/>
    <property type="gene ID" value="TraesMAC3D03G01834000"/>
</dbReference>
<dbReference type="EnsemblPlants" id="TraesNOR3D03G01862500.1">
    <property type="protein sequence ID" value="TraesNOR3D03G01862500.1"/>
    <property type="gene ID" value="TraesNOR3D03G01862500"/>
</dbReference>
<dbReference type="EnsemblPlants" id="TraesPARA_EIv1.0_1077930.1">
    <property type="protein sequence ID" value="TraesPARA_EIv1.0_1077930.1.CDS"/>
    <property type="gene ID" value="TraesPARA_EIv1.0_1077930"/>
</dbReference>
<dbReference type="EnsemblPlants" id="TraesSTA3D03G01830300.1">
    <property type="protein sequence ID" value="TraesSTA3D03G01830300.1"/>
    <property type="gene ID" value="TraesSTA3D03G01830300"/>
</dbReference>
<dbReference type="EnsemblPlants" id="TraesWEE_scaffold_013020_01G000100.1">
    <property type="protein sequence ID" value="TraesWEE_scaffold_013020_01G000100.1"/>
    <property type="gene ID" value="TraesWEE_scaffold_013020_01G000100"/>
</dbReference>
<dbReference type="Gramene" id="TraesARI3D03G01867980.1">
    <property type="protein sequence ID" value="TraesARI3D03G01867980.1"/>
    <property type="gene ID" value="TraesARI3D03G01867980"/>
</dbReference>
<dbReference type="Gramene" id="TraesCAD_scaffold_009178_01G000100.1">
    <property type="protein sequence ID" value="TraesCAD_scaffold_009178_01G000100.1"/>
    <property type="gene ID" value="TraesCAD_scaffold_009178_01G000100"/>
</dbReference>
<dbReference type="Gramene" id="TraesCLE_scaffold_007974_01G000100.1">
    <property type="protein sequence ID" value="TraesCLE_scaffold_007974_01G000100.1"/>
    <property type="gene ID" value="TraesCLE_scaffold_007974_01G000100"/>
</dbReference>
<dbReference type="Gramene" id="TraesCS3D02G124500.1">
    <property type="protein sequence ID" value="TraesCS3D02G124500.1"/>
    <property type="gene ID" value="TraesCS3D02G124500"/>
</dbReference>
<dbReference type="Gramene" id="TraesCS3D03G0261200.1">
    <property type="protein sequence ID" value="TraesCS3D03G0261200.1.CDS"/>
    <property type="gene ID" value="TraesCS3D03G0261200"/>
</dbReference>
<dbReference type="Gramene" id="TraesJAG3D03G01844250.1">
    <property type="protein sequence ID" value="TraesJAG3D03G01844250.1"/>
    <property type="gene ID" value="TraesJAG3D03G01844250"/>
</dbReference>
<dbReference type="Gramene" id="TraesJUL3D03G01853490.1">
    <property type="protein sequence ID" value="TraesJUL3D03G01853490.1"/>
    <property type="gene ID" value="TraesJUL3D03G01853490"/>
</dbReference>
<dbReference type="Gramene" id="TraesKAR3D01G0067850.1">
    <property type="protein sequence ID" value="cds.TraesKAR3D01G0067850.1"/>
    <property type="gene ID" value="TraesKAR3D01G0067850"/>
</dbReference>
<dbReference type="Gramene" id="TraesLAC3D03G01777020.1">
    <property type="protein sequence ID" value="TraesLAC3D03G01777020.1"/>
    <property type="gene ID" value="TraesLAC3D03G01777020"/>
</dbReference>
<dbReference type="Gramene" id="TraesLDM3D03G01833850.1">
    <property type="protein sequence ID" value="TraesLDM3D03G01833850.1"/>
    <property type="gene ID" value="TraesLDM3D03G01833850"/>
</dbReference>
<dbReference type="Gramene" id="TraesMAC3D03G01834000.1">
    <property type="protein sequence ID" value="TraesMAC3D03G01834000.1"/>
    <property type="gene ID" value="TraesMAC3D03G01834000"/>
</dbReference>
<dbReference type="Gramene" id="TraesNOR3D03G01862500.1">
    <property type="protein sequence ID" value="TraesNOR3D03G01862500.1"/>
    <property type="gene ID" value="TraesNOR3D03G01862500"/>
</dbReference>
<dbReference type="Gramene" id="TraesPARA_EIv1.0_1077930.1">
    <property type="protein sequence ID" value="TraesPARA_EIv1.0_1077930.1.CDS"/>
    <property type="gene ID" value="TraesPARA_EIv1.0_1077930"/>
</dbReference>
<dbReference type="Gramene" id="TraesSTA3D03G01830300.1">
    <property type="protein sequence ID" value="TraesSTA3D03G01830300.1"/>
    <property type="gene ID" value="TraesSTA3D03G01830300"/>
</dbReference>
<dbReference type="Gramene" id="TraesWEE_scaffold_013020_01G000100.1">
    <property type="protein sequence ID" value="TraesWEE_scaffold_013020_01G000100.1"/>
    <property type="gene ID" value="TraesWEE_scaffold_013020_01G000100"/>
</dbReference>
<dbReference type="OMA" id="GHACKKW"/>
<dbReference type="OrthoDB" id="288590at2759"/>
<dbReference type="BioCyc" id="MetaCyc:MONOMER-11645"/>
<dbReference type="BRENDA" id="1.14.11.15">
    <property type="organism ID" value="6500"/>
</dbReference>
<dbReference type="Proteomes" id="UP000019116">
    <property type="component" value="Chromosome 3D"/>
</dbReference>
<dbReference type="ExpressionAtlas" id="Q3I410">
    <property type="expression patterns" value="baseline and differential"/>
</dbReference>
<dbReference type="GO" id="GO:0016707">
    <property type="term" value="F:gibberellin 3-beta-dioxygenase activity"/>
    <property type="evidence" value="ECO:0000318"/>
    <property type="project" value="GO_Central"/>
</dbReference>
<dbReference type="GO" id="GO:0046872">
    <property type="term" value="F:metal ion binding"/>
    <property type="evidence" value="ECO:0007669"/>
    <property type="project" value="UniProtKB-KW"/>
</dbReference>
<dbReference type="GO" id="GO:0009686">
    <property type="term" value="P:gibberellin biosynthetic process"/>
    <property type="evidence" value="ECO:0000318"/>
    <property type="project" value="GO_Central"/>
</dbReference>
<dbReference type="GO" id="GO:0009416">
    <property type="term" value="P:response to light stimulus"/>
    <property type="evidence" value="ECO:0000318"/>
    <property type="project" value="GO_Central"/>
</dbReference>
<dbReference type="FunFam" id="2.60.120.330:FF:000013">
    <property type="entry name" value="Gibberellin 3-beta-dioxygenase 1"/>
    <property type="match status" value="1"/>
</dbReference>
<dbReference type="Gene3D" id="2.60.120.330">
    <property type="entry name" value="B-lactam Antibiotic, Isopenicillin N Synthase, Chain"/>
    <property type="match status" value="1"/>
</dbReference>
<dbReference type="InterPro" id="IPR026992">
    <property type="entry name" value="DIOX_N"/>
</dbReference>
<dbReference type="InterPro" id="IPR044861">
    <property type="entry name" value="IPNS-like_FE2OG_OXY"/>
</dbReference>
<dbReference type="InterPro" id="IPR027443">
    <property type="entry name" value="IPNS-like_sf"/>
</dbReference>
<dbReference type="InterPro" id="IPR050231">
    <property type="entry name" value="Iron_ascorbate_oxido_reductase"/>
</dbReference>
<dbReference type="InterPro" id="IPR005123">
    <property type="entry name" value="Oxoglu/Fe-dep_dioxygenase_dom"/>
</dbReference>
<dbReference type="PANTHER" id="PTHR47990">
    <property type="entry name" value="2-OXOGLUTARATE (2OG) AND FE(II)-DEPENDENT OXYGENASE SUPERFAMILY PROTEIN-RELATED"/>
    <property type="match status" value="1"/>
</dbReference>
<dbReference type="Pfam" id="PF03171">
    <property type="entry name" value="2OG-FeII_Oxy"/>
    <property type="match status" value="1"/>
</dbReference>
<dbReference type="Pfam" id="PF14226">
    <property type="entry name" value="DIOX_N"/>
    <property type="match status" value="1"/>
</dbReference>
<dbReference type="SUPFAM" id="SSF51197">
    <property type="entry name" value="Clavaminate synthase-like"/>
    <property type="match status" value="1"/>
</dbReference>
<dbReference type="PROSITE" id="PS51471">
    <property type="entry name" value="FE2OG_OXY"/>
    <property type="match status" value="1"/>
</dbReference>
<accession>Q3I410</accession>
<sequence>MPTPAHLSKDPRYFDFRAARRVPETHAWPGLHDHPVVDGSGAGGGPDAVPVVDMRDPCAAEAVALAAQDWGAFLLEGHGVPLELLARVEAAIAGMFALPASEKMRAVRRPGDSCGYGSPPISSFFSKCMWSEGYTFSPANLRSDLRKLWPKAGHDYRHFCAVMEEFHREMRALADKLLELFLVALGLTGEQVAAVESEQKIAETMTATMHLNWYPKCPDPKRALGLIAHTDSGFFTFVLQSLVPGLQLFRHGPDRWVTVPAVPGAMVVNVGDLFQILTNGRFHSVYHRAVVNRDSDRISLGYFLGPPAHVKVAPLREALAGTPAAYRAVTWPEYMGVRKKAFTTGASALKMVAISTDNDAANHTDDLISS</sequence>
<name>G3O22_WHEAT</name>
<reference key="1">
    <citation type="journal article" date="2006" name="Planta">
        <title>Function and transcript analysis of gibberellin-biosynthetic enzymes in wheat.</title>
        <authorList>
            <person name="Appleford N.E."/>
            <person name="Evans D.J."/>
            <person name="Lenton J.R."/>
            <person name="Gaskin P."/>
            <person name="Croker S.J."/>
            <person name="Devos K.M."/>
            <person name="Phillips A.L."/>
            <person name="Hedden P."/>
        </authorList>
    </citation>
    <scope>NUCLEOTIDE SEQUENCE [MRNA]</scope>
    <scope>FUNCTION</scope>
    <source>
        <strain>cv. Maris Huntsman</strain>
        <tissue>Scutellum</tissue>
    </source>
</reference>
<keyword id="KW-0223">Dioxygenase</keyword>
<keyword id="KW-0408">Iron</keyword>
<keyword id="KW-0479">Metal-binding</keyword>
<keyword id="KW-0560">Oxidoreductase</keyword>
<keyword id="KW-1185">Reference proteome</keyword>
<feature type="chain" id="PRO_0000067318" description="Gibberellin 3-beta-dioxygenase 2-2">
    <location>
        <begin position="1"/>
        <end position="370"/>
    </location>
</feature>
<feature type="domain" description="Fe2OG dioxygenase" evidence="3">
    <location>
        <begin position="205"/>
        <end position="306"/>
    </location>
</feature>
<feature type="active site" evidence="2">
    <location>
        <position position="297"/>
    </location>
</feature>
<feature type="binding site" evidence="3">
    <location>
        <position position="229"/>
    </location>
    <ligand>
        <name>Fe cation</name>
        <dbReference type="ChEBI" id="CHEBI:24875"/>
    </ligand>
</feature>
<feature type="binding site" evidence="3">
    <location>
        <position position="231"/>
    </location>
    <ligand>
        <name>Fe cation</name>
        <dbReference type="ChEBI" id="CHEBI:24875"/>
    </ligand>
</feature>
<feature type="binding site" evidence="3">
    <location>
        <position position="287"/>
    </location>
    <ligand>
        <name>Fe cation</name>
        <dbReference type="ChEBI" id="CHEBI:24875"/>
    </ligand>
</feature>
<evidence type="ECO:0000250" key="1"/>
<evidence type="ECO:0000255" key="2"/>
<evidence type="ECO:0000255" key="3">
    <source>
        <dbReference type="PROSITE-ProRule" id="PRU00805"/>
    </source>
</evidence>
<evidence type="ECO:0000269" key="4">
    <source>
    </source>
</evidence>
<evidence type="ECO:0000305" key="5"/>